<organism>
    <name type="scientific">Leuconostoc mesenteroides subsp. mesenteroides (strain ATCC 8293 / DSM 20343 / BCRC 11652 / CCM 1803 / JCM 6124 / NCDO 523 / NBRC 100496 / NCIMB 8023 / NCTC 12954 / NRRL B-1118 / 37Y)</name>
    <dbReference type="NCBI Taxonomy" id="203120"/>
    <lineage>
        <taxon>Bacteria</taxon>
        <taxon>Bacillati</taxon>
        <taxon>Bacillota</taxon>
        <taxon>Bacilli</taxon>
        <taxon>Lactobacillales</taxon>
        <taxon>Lactobacillaceae</taxon>
        <taxon>Leuconostoc</taxon>
    </lineage>
</organism>
<keyword id="KW-1185">Reference proteome</keyword>
<dbReference type="EMBL" id="CP000414">
    <property type="protein sequence ID" value="ABJ61872.1"/>
    <property type="molecule type" value="Genomic_DNA"/>
</dbReference>
<dbReference type="RefSeq" id="WP_010295592.1">
    <property type="nucleotide sequence ID" value="NC_008531.1"/>
</dbReference>
<dbReference type="SMR" id="Q03Y50"/>
<dbReference type="EnsemblBacteria" id="ABJ61872">
    <property type="protein sequence ID" value="ABJ61872"/>
    <property type="gene ID" value="LEUM_0763"/>
</dbReference>
<dbReference type="GeneID" id="29575967"/>
<dbReference type="KEGG" id="lme:LEUM_0763"/>
<dbReference type="eggNOG" id="COG4479">
    <property type="taxonomic scope" value="Bacteria"/>
</dbReference>
<dbReference type="HOGENOM" id="CLU_177534_1_0_9"/>
<dbReference type="Proteomes" id="UP000000362">
    <property type="component" value="Chromosome"/>
</dbReference>
<dbReference type="Gene3D" id="1.10.150.260">
    <property type="entry name" value="YozE SAM-like"/>
    <property type="match status" value="1"/>
</dbReference>
<dbReference type="HAMAP" id="MF_01538">
    <property type="entry name" value="UPF0346"/>
    <property type="match status" value="1"/>
</dbReference>
<dbReference type="InterPro" id="IPR010673">
    <property type="entry name" value="UPF0346"/>
</dbReference>
<dbReference type="InterPro" id="IPR023089">
    <property type="entry name" value="YozE_SAM-like"/>
</dbReference>
<dbReference type="InterPro" id="IPR036806">
    <property type="entry name" value="YozE_SAM-like_sf"/>
</dbReference>
<dbReference type="NCBIfam" id="NF010193">
    <property type="entry name" value="PRK13672.1"/>
    <property type="match status" value="1"/>
</dbReference>
<dbReference type="Pfam" id="PF06855">
    <property type="entry name" value="YozE_SAM_like"/>
    <property type="match status" value="1"/>
</dbReference>
<dbReference type="PIRSF" id="PIRSF037262">
    <property type="entry name" value="UCP037262"/>
    <property type="match status" value="1"/>
</dbReference>
<dbReference type="SUPFAM" id="SSF140652">
    <property type="entry name" value="YozE-like"/>
    <property type="match status" value="1"/>
</dbReference>
<gene>
    <name type="ordered locus">LEUM_0763</name>
</gene>
<proteinExistence type="inferred from homology"/>
<evidence type="ECO:0000255" key="1">
    <source>
        <dbReference type="HAMAP-Rule" id="MF_01538"/>
    </source>
</evidence>
<protein>
    <recommendedName>
        <fullName evidence="1">UPF0346 protein LEUM_0763</fullName>
    </recommendedName>
</protein>
<accession>Q03Y50</accession>
<sequence>MRKSDRSFYNWLMTNRNSMAANEVQQFANNAFLDSSFPKQSSDFDELSQYLEENTTYLMSMTTFDEAWSLYNAER</sequence>
<feature type="chain" id="PRO_0000292795" description="UPF0346 protein LEUM_0763">
    <location>
        <begin position="1"/>
        <end position="75"/>
    </location>
</feature>
<comment type="similarity">
    <text evidence="1">Belongs to the UPF0346 family.</text>
</comment>
<reference key="1">
    <citation type="journal article" date="2006" name="Proc. Natl. Acad. Sci. U.S.A.">
        <title>Comparative genomics of the lactic acid bacteria.</title>
        <authorList>
            <person name="Makarova K.S."/>
            <person name="Slesarev A."/>
            <person name="Wolf Y.I."/>
            <person name="Sorokin A."/>
            <person name="Mirkin B."/>
            <person name="Koonin E.V."/>
            <person name="Pavlov A."/>
            <person name="Pavlova N."/>
            <person name="Karamychev V."/>
            <person name="Polouchine N."/>
            <person name="Shakhova V."/>
            <person name="Grigoriev I."/>
            <person name="Lou Y."/>
            <person name="Rohksar D."/>
            <person name="Lucas S."/>
            <person name="Huang K."/>
            <person name="Goodstein D.M."/>
            <person name="Hawkins T."/>
            <person name="Plengvidhya V."/>
            <person name="Welker D."/>
            <person name="Hughes J."/>
            <person name="Goh Y."/>
            <person name="Benson A."/>
            <person name="Baldwin K."/>
            <person name="Lee J.-H."/>
            <person name="Diaz-Muniz I."/>
            <person name="Dosti B."/>
            <person name="Smeianov V."/>
            <person name="Wechter W."/>
            <person name="Barabote R."/>
            <person name="Lorca G."/>
            <person name="Altermann E."/>
            <person name="Barrangou R."/>
            <person name="Ganesan B."/>
            <person name="Xie Y."/>
            <person name="Rawsthorne H."/>
            <person name="Tamir D."/>
            <person name="Parker C."/>
            <person name="Breidt F."/>
            <person name="Broadbent J.R."/>
            <person name="Hutkins R."/>
            <person name="O'Sullivan D."/>
            <person name="Steele J."/>
            <person name="Unlu G."/>
            <person name="Saier M.H. Jr."/>
            <person name="Klaenhammer T."/>
            <person name="Richardson P."/>
            <person name="Kozyavkin S."/>
            <person name="Weimer B.C."/>
            <person name="Mills D.A."/>
        </authorList>
    </citation>
    <scope>NUCLEOTIDE SEQUENCE [LARGE SCALE GENOMIC DNA]</scope>
    <source>
        <strain>ATCC 8293 / DSM 20343 / BCRC 11652 / CCM 1803 / JCM 6124 / NCDO 523 / NBRC 100496 / NCIMB 8023 / NCTC 12954 / NRRL B-1118 / 37Y</strain>
    </source>
</reference>
<name>Y763_LEUMM</name>